<sequence>MNKLTPDEAIDLAYDIFLEMAGENLDPADILLFNLQFEERGAVEMVETSENWDQEIGTLIDPDAFAEVWVGLVNDKDEMDDVFARFLISHDADNREYHVIWKE</sequence>
<gene>
    <name type="ordered locus">APL_1348</name>
</gene>
<feature type="chain" id="PRO_1000044904" description="Putative double-stranded DNA mimic protein APL_1348">
    <location>
        <begin position="1"/>
        <end position="103"/>
    </location>
</feature>
<protein>
    <recommendedName>
        <fullName evidence="1">Putative double-stranded DNA mimic protein APL_1348</fullName>
    </recommendedName>
</protein>
<dbReference type="EMBL" id="CP000569">
    <property type="protein sequence ID" value="ABN74432.1"/>
    <property type="molecule type" value="Genomic_DNA"/>
</dbReference>
<dbReference type="RefSeq" id="WP_005598462.1">
    <property type="nucleotide sequence ID" value="NC_009053.1"/>
</dbReference>
<dbReference type="SMR" id="A3N1Z6"/>
<dbReference type="STRING" id="416269.APL_1348"/>
<dbReference type="EnsemblBacteria" id="ABN74432">
    <property type="protein sequence ID" value="ABN74432"/>
    <property type="gene ID" value="APL_1348"/>
</dbReference>
<dbReference type="KEGG" id="apl:APL_1348"/>
<dbReference type="eggNOG" id="COG3099">
    <property type="taxonomic scope" value="Bacteria"/>
</dbReference>
<dbReference type="HOGENOM" id="CLU_143392_0_0_6"/>
<dbReference type="Proteomes" id="UP000001432">
    <property type="component" value="Chromosome"/>
</dbReference>
<dbReference type="Gene3D" id="3.10.450.140">
    <property type="entry name" value="dsDNA mimic, putative"/>
    <property type="match status" value="1"/>
</dbReference>
<dbReference type="HAMAP" id="MF_00680">
    <property type="entry name" value="Put_dsDNA_mimic"/>
    <property type="match status" value="1"/>
</dbReference>
<dbReference type="InterPro" id="IPR007376">
    <property type="entry name" value="dsDNA_mimic_put"/>
</dbReference>
<dbReference type="InterPro" id="IPR036763">
    <property type="entry name" value="Put_dsDNA_mimic_sf"/>
</dbReference>
<dbReference type="NCBIfam" id="NF003469">
    <property type="entry name" value="PRK05094.1"/>
    <property type="match status" value="1"/>
</dbReference>
<dbReference type="Pfam" id="PF04269">
    <property type="entry name" value="DUF440"/>
    <property type="match status" value="1"/>
</dbReference>
<dbReference type="PIRSF" id="PIRSF004916">
    <property type="entry name" value="UCP004916"/>
    <property type="match status" value="1"/>
</dbReference>
<dbReference type="SUPFAM" id="SSF102816">
    <property type="entry name" value="Putative dsDNA mimic"/>
    <property type="match status" value="1"/>
</dbReference>
<organism>
    <name type="scientific">Actinobacillus pleuropneumoniae serotype 5b (strain L20)</name>
    <dbReference type="NCBI Taxonomy" id="416269"/>
    <lineage>
        <taxon>Bacteria</taxon>
        <taxon>Pseudomonadati</taxon>
        <taxon>Pseudomonadota</taxon>
        <taxon>Gammaproteobacteria</taxon>
        <taxon>Pasteurellales</taxon>
        <taxon>Pasteurellaceae</taxon>
        <taxon>Actinobacillus</taxon>
    </lineage>
</organism>
<keyword id="KW-1185">Reference proteome</keyword>
<name>Y1348_ACTP2</name>
<accession>A3N1Z6</accession>
<comment type="function">
    <text evidence="1">May act as a double-stranded DNA (dsDNA) mimic. Probably regulates the activity of a dsDNA-binding protein.</text>
</comment>
<comment type="similarity">
    <text evidence="1">Belongs to the putative dsDNA mimic protein family.</text>
</comment>
<proteinExistence type="inferred from homology"/>
<evidence type="ECO:0000255" key="1">
    <source>
        <dbReference type="HAMAP-Rule" id="MF_00680"/>
    </source>
</evidence>
<reference key="1">
    <citation type="journal article" date="2008" name="J. Bacteriol.">
        <title>The complete genome sequence of Actinobacillus pleuropneumoniae L20 (serotype 5b).</title>
        <authorList>
            <person name="Foote S.J."/>
            <person name="Bosse J.T."/>
            <person name="Bouevitch A.B."/>
            <person name="Langford P.R."/>
            <person name="Young N.M."/>
            <person name="Nash J.H.E."/>
        </authorList>
    </citation>
    <scope>NUCLEOTIDE SEQUENCE [LARGE SCALE GENOMIC DNA]</scope>
    <source>
        <strain>L20</strain>
    </source>
</reference>